<gene>
    <name type="ordered locus">gll3134</name>
</gene>
<evidence type="ECO:0000250" key="1"/>
<evidence type="ECO:0000255" key="2">
    <source>
        <dbReference type="PROSITE-ProRule" id="PRU00208"/>
    </source>
</evidence>
<evidence type="ECO:0000255" key="3">
    <source>
        <dbReference type="PROSITE-ProRule" id="PRU01024"/>
    </source>
</evidence>
<feature type="chain" id="PRO_0000161983" description="Uncharacterized RNA methyltransferase gll3134">
    <location>
        <begin position="1"/>
        <end position="457"/>
    </location>
</feature>
<feature type="domain" description="TRAM" evidence="2">
    <location>
        <begin position="10"/>
        <end position="69"/>
    </location>
</feature>
<feature type="active site" description="Nucleophile" evidence="3">
    <location>
        <position position="414"/>
    </location>
</feature>
<feature type="binding site" evidence="1">
    <location>
        <position position="82"/>
    </location>
    <ligand>
        <name>[4Fe-4S] cluster</name>
        <dbReference type="ChEBI" id="CHEBI:49883"/>
    </ligand>
</feature>
<feature type="binding site" evidence="1">
    <location>
        <position position="88"/>
    </location>
    <ligand>
        <name>[4Fe-4S] cluster</name>
        <dbReference type="ChEBI" id="CHEBI:49883"/>
    </ligand>
</feature>
<feature type="binding site" evidence="1">
    <location>
        <position position="91"/>
    </location>
    <ligand>
        <name>[4Fe-4S] cluster</name>
        <dbReference type="ChEBI" id="CHEBI:49883"/>
    </ligand>
</feature>
<feature type="binding site" evidence="1">
    <location>
        <position position="170"/>
    </location>
    <ligand>
        <name>[4Fe-4S] cluster</name>
        <dbReference type="ChEBI" id="CHEBI:49883"/>
    </ligand>
</feature>
<feature type="binding site" evidence="3">
    <location>
        <position position="294"/>
    </location>
    <ligand>
        <name>S-adenosyl-L-methionine</name>
        <dbReference type="ChEBI" id="CHEBI:59789"/>
    </ligand>
</feature>
<feature type="binding site" evidence="3">
    <location>
        <position position="323"/>
    </location>
    <ligand>
        <name>S-adenosyl-L-methionine</name>
        <dbReference type="ChEBI" id="CHEBI:59789"/>
    </ligand>
</feature>
<feature type="binding site" evidence="3">
    <location>
        <position position="344"/>
    </location>
    <ligand>
        <name>S-adenosyl-L-methionine</name>
        <dbReference type="ChEBI" id="CHEBI:59789"/>
    </ligand>
</feature>
<feature type="binding site" evidence="3">
    <location>
        <position position="387"/>
    </location>
    <ligand>
        <name>S-adenosyl-L-methionine</name>
        <dbReference type="ChEBI" id="CHEBI:59789"/>
    </ligand>
</feature>
<keyword id="KW-0004">4Fe-4S</keyword>
<keyword id="KW-0408">Iron</keyword>
<keyword id="KW-0411">Iron-sulfur</keyword>
<keyword id="KW-0479">Metal-binding</keyword>
<keyword id="KW-0489">Methyltransferase</keyword>
<keyword id="KW-1185">Reference proteome</keyword>
<keyword id="KW-0949">S-adenosyl-L-methionine</keyword>
<keyword id="KW-0808">Transferase</keyword>
<sequence length="457" mass="49842">MVGRPVEPGALLQGQTVTVPITALAAGGDGIARLTDGRVLFVAGAVPGDTVEARLVHLKKDHGFGKILQIVQASPHRIEAPCPVAERCGSCQWQWIDYPFQLEAKQRQVREALEHLGGFAEPPVEPVIAQPRPFGYRNKSTFPIGRDARGEPVIGYYQKDSHRIVPLDACPVQDSRLDPLLAAARELIRTQGWSIYDEKHHRGALRHLGLRIGERTGQRLLTFVVNGQTLSGIKPAAQALMDRFADLVGVCLNTHTERGNTIFGPQTRCLAGQDFIEEVLDGFRFRIEPTTFFQICTSQAEILARLVARGADATAEQTVVDAYCGIGTLSLPLARAARAVVGIESHVRSVEQARQNARINGIENCRFLAGTVEALLPDLRADIVVVDPPRKGCDPEVLEAILHAVPMRVVYVSCNPATLARDLKRLVAGGYCLVGVQPVDLFAQTHHVECVATLERS</sequence>
<reference key="1">
    <citation type="journal article" date="2003" name="DNA Res.">
        <title>Complete genome structure of Gloeobacter violaceus PCC 7421, a cyanobacterium that lacks thylakoids.</title>
        <authorList>
            <person name="Nakamura Y."/>
            <person name="Kaneko T."/>
            <person name="Sato S."/>
            <person name="Mimuro M."/>
            <person name="Miyashita H."/>
            <person name="Tsuchiya T."/>
            <person name="Sasamoto S."/>
            <person name="Watanabe A."/>
            <person name="Kawashima K."/>
            <person name="Kishida Y."/>
            <person name="Kiyokawa C."/>
            <person name="Kohara M."/>
            <person name="Matsumoto M."/>
            <person name="Matsuno A."/>
            <person name="Nakazaki N."/>
            <person name="Shimpo S."/>
            <person name="Takeuchi C."/>
            <person name="Yamada M."/>
            <person name="Tabata S."/>
        </authorList>
    </citation>
    <scope>NUCLEOTIDE SEQUENCE [LARGE SCALE GENOMIC DNA]</scope>
    <source>
        <strain>ATCC 29082 / PCC 7421</strain>
    </source>
</reference>
<accession>Q7NGN4</accession>
<protein>
    <recommendedName>
        <fullName>Uncharacterized RNA methyltransferase gll3134</fullName>
        <ecNumber>2.1.1.-</ecNumber>
    </recommendedName>
</protein>
<comment type="similarity">
    <text evidence="3">Belongs to the class I-like SAM-binding methyltransferase superfamily. RNA M5U methyltransferase family.</text>
</comment>
<organism>
    <name type="scientific">Gloeobacter violaceus (strain ATCC 29082 / PCC 7421)</name>
    <dbReference type="NCBI Taxonomy" id="251221"/>
    <lineage>
        <taxon>Bacteria</taxon>
        <taxon>Bacillati</taxon>
        <taxon>Cyanobacteriota</taxon>
        <taxon>Cyanophyceae</taxon>
        <taxon>Gloeobacterales</taxon>
        <taxon>Gloeobacteraceae</taxon>
        <taxon>Gloeobacter</taxon>
    </lineage>
</organism>
<proteinExistence type="inferred from homology"/>
<name>Y3134_GLOVI</name>
<dbReference type="EC" id="2.1.1.-"/>
<dbReference type="EMBL" id="BA000045">
    <property type="protein sequence ID" value="BAC91075.1"/>
    <property type="molecule type" value="Genomic_DNA"/>
</dbReference>
<dbReference type="RefSeq" id="NP_926080.1">
    <property type="nucleotide sequence ID" value="NC_005125.1"/>
</dbReference>
<dbReference type="RefSeq" id="WP_011143127.1">
    <property type="nucleotide sequence ID" value="NC_005125.1"/>
</dbReference>
<dbReference type="SMR" id="Q7NGN4"/>
<dbReference type="FunCoup" id="Q7NGN4">
    <property type="interactions" value="150"/>
</dbReference>
<dbReference type="STRING" id="251221.gene:10760640"/>
<dbReference type="EnsemblBacteria" id="BAC91075">
    <property type="protein sequence ID" value="BAC91075"/>
    <property type="gene ID" value="BAC91075"/>
</dbReference>
<dbReference type="KEGG" id="gvi:gll3134"/>
<dbReference type="PATRIC" id="fig|251221.4.peg.3164"/>
<dbReference type="eggNOG" id="COG2265">
    <property type="taxonomic scope" value="Bacteria"/>
</dbReference>
<dbReference type="HOGENOM" id="CLU_014689_7_0_3"/>
<dbReference type="InParanoid" id="Q7NGN4"/>
<dbReference type="OrthoDB" id="9804590at2"/>
<dbReference type="PhylomeDB" id="Q7NGN4"/>
<dbReference type="Proteomes" id="UP000000557">
    <property type="component" value="Chromosome"/>
</dbReference>
<dbReference type="GO" id="GO:0051539">
    <property type="term" value="F:4 iron, 4 sulfur cluster binding"/>
    <property type="evidence" value="ECO:0007669"/>
    <property type="project" value="UniProtKB-KW"/>
</dbReference>
<dbReference type="GO" id="GO:0046872">
    <property type="term" value="F:metal ion binding"/>
    <property type="evidence" value="ECO:0007669"/>
    <property type="project" value="UniProtKB-KW"/>
</dbReference>
<dbReference type="GO" id="GO:0070041">
    <property type="term" value="F:rRNA (uridine-C5-)-methyltransferase activity"/>
    <property type="evidence" value="ECO:0000318"/>
    <property type="project" value="GO_Central"/>
</dbReference>
<dbReference type="GO" id="GO:0070475">
    <property type="term" value="P:rRNA base methylation"/>
    <property type="evidence" value="ECO:0000318"/>
    <property type="project" value="GO_Central"/>
</dbReference>
<dbReference type="CDD" id="cd02440">
    <property type="entry name" value="AdoMet_MTases"/>
    <property type="match status" value="1"/>
</dbReference>
<dbReference type="FunFam" id="3.40.50.150:FF:000009">
    <property type="entry name" value="23S rRNA (Uracil(1939)-C(5))-methyltransferase RlmD"/>
    <property type="match status" value="1"/>
</dbReference>
<dbReference type="FunFam" id="2.40.50.140:FF:000097">
    <property type="entry name" value="23S rRNA (uracil(1939)-C(5))-methyltransferase RlmD"/>
    <property type="match status" value="1"/>
</dbReference>
<dbReference type="FunFam" id="2.40.50.1070:FF:000003">
    <property type="entry name" value="23S rRNA (Uracil-5-)-methyltransferase RumA"/>
    <property type="match status" value="1"/>
</dbReference>
<dbReference type="Gene3D" id="2.40.50.1070">
    <property type="match status" value="1"/>
</dbReference>
<dbReference type="Gene3D" id="2.40.50.140">
    <property type="entry name" value="Nucleic acid-binding proteins"/>
    <property type="match status" value="1"/>
</dbReference>
<dbReference type="Gene3D" id="3.40.50.150">
    <property type="entry name" value="Vaccinia Virus protein VP39"/>
    <property type="match status" value="1"/>
</dbReference>
<dbReference type="InterPro" id="IPR030390">
    <property type="entry name" value="MeTrfase_TrmA_AS"/>
</dbReference>
<dbReference type="InterPro" id="IPR012340">
    <property type="entry name" value="NA-bd_OB-fold"/>
</dbReference>
<dbReference type="InterPro" id="IPR029063">
    <property type="entry name" value="SAM-dependent_MTases_sf"/>
</dbReference>
<dbReference type="InterPro" id="IPR002792">
    <property type="entry name" value="TRAM_dom"/>
</dbReference>
<dbReference type="InterPro" id="IPR010280">
    <property type="entry name" value="U5_MeTrfase_fam"/>
</dbReference>
<dbReference type="NCBIfam" id="TIGR00479">
    <property type="entry name" value="rumA"/>
    <property type="match status" value="1"/>
</dbReference>
<dbReference type="PANTHER" id="PTHR11061">
    <property type="entry name" value="RNA M5U METHYLTRANSFERASE"/>
    <property type="match status" value="1"/>
</dbReference>
<dbReference type="PANTHER" id="PTHR11061:SF30">
    <property type="entry name" value="TRNA (URACIL(54)-C(5))-METHYLTRANSFERASE"/>
    <property type="match status" value="1"/>
</dbReference>
<dbReference type="Pfam" id="PF01938">
    <property type="entry name" value="TRAM"/>
    <property type="match status" value="1"/>
</dbReference>
<dbReference type="Pfam" id="PF05958">
    <property type="entry name" value="tRNA_U5-meth_tr"/>
    <property type="match status" value="2"/>
</dbReference>
<dbReference type="SUPFAM" id="SSF50249">
    <property type="entry name" value="Nucleic acid-binding proteins"/>
    <property type="match status" value="1"/>
</dbReference>
<dbReference type="SUPFAM" id="SSF53335">
    <property type="entry name" value="S-adenosyl-L-methionine-dependent methyltransferases"/>
    <property type="match status" value="1"/>
</dbReference>
<dbReference type="PROSITE" id="PS51687">
    <property type="entry name" value="SAM_MT_RNA_M5U"/>
    <property type="match status" value="1"/>
</dbReference>
<dbReference type="PROSITE" id="PS50926">
    <property type="entry name" value="TRAM"/>
    <property type="match status" value="1"/>
</dbReference>
<dbReference type="PROSITE" id="PS01230">
    <property type="entry name" value="TRMA_1"/>
    <property type="match status" value="1"/>
</dbReference>